<protein>
    <recommendedName>
        <fullName evidence="1">UPF0303 protein BOV_1367</fullName>
    </recommendedName>
</protein>
<proteinExistence type="inferred from homology"/>
<gene>
    <name type="ordered locus">BOV_1367</name>
</gene>
<sequence>MAQGDDNKQAIGQIIRQEQALIFPSLDENDAFSLGQRIRDIAVKDKLGIAIDISLWDRRLFFAATAGATADNIEWLRRKFNVVRRFHVSTYRLVLEQNREDRMFAPYKALDVADYALAGGGFPIRVSGAGVIGAVIVSGLPQREDHNLVVRAVAEHVGQDPVALALPAA</sequence>
<name>Y1367_BRUO2</name>
<reference key="1">
    <citation type="journal article" date="2009" name="PLoS ONE">
        <title>Genome degradation in Brucella ovis corresponds with narrowing of its host range and tissue tropism.</title>
        <authorList>
            <person name="Tsolis R.M."/>
            <person name="Seshadri R."/>
            <person name="Santos R.L."/>
            <person name="Sangari F.J."/>
            <person name="Lobo J.M."/>
            <person name="de Jong M.F."/>
            <person name="Ren Q."/>
            <person name="Myers G."/>
            <person name="Brinkac L.M."/>
            <person name="Nelson W.C."/>
            <person name="Deboy R.T."/>
            <person name="Angiuoli S."/>
            <person name="Khouri H."/>
            <person name="Dimitrov G."/>
            <person name="Robinson J.R."/>
            <person name="Mulligan S."/>
            <person name="Walker R.L."/>
            <person name="Elzer P.E."/>
            <person name="Hassan K.A."/>
            <person name="Paulsen I.T."/>
        </authorList>
    </citation>
    <scope>NUCLEOTIDE SEQUENCE [LARGE SCALE GENOMIC DNA]</scope>
    <source>
        <strain>ATCC 25840 / 63/290 / NCTC 10512</strain>
    </source>
</reference>
<dbReference type="EMBL" id="CP000708">
    <property type="protein sequence ID" value="ABQ61342.1"/>
    <property type="molecule type" value="Genomic_DNA"/>
</dbReference>
<dbReference type="RefSeq" id="WP_006013130.1">
    <property type="nucleotide sequence ID" value="NC_009505.1"/>
</dbReference>
<dbReference type="SMR" id="A5VRF8"/>
<dbReference type="GeneID" id="45124755"/>
<dbReference type="KEGG" id="bov:BOV_1367"/>
<dbReference type="HOGENOM" id="CLU_101036_2_2_5"/>
<dbReference type="PhylomeDB" id="A5VRF8"/>
<dbReference type="Proteomes" id="UP000006383">
    <property type="component" value="Chromosome I"/>
</dbReference>
<dbReference type="Gene3D" id="3.30.450.150">
    <property type="entry name" value="Haem-degrading domain"/>
    <property type="match status" value="1"/>
</dbReference>
<dbReference type="HAMAP" id="MF_00761">
    <property type="entry name" value="UPF0303"/>
    <property type="match status" value="1"/>
</dbReference>
<dbReference type="InterPro" id="IPR005624">
    <property type="entry name" value="PduO/GlcC-like"/>
</dbReference>
<dbReference type="InterPro" id="IPR038084">
    <property type="entry name" value="PduO/GlcC-like_sf"/>
</dbReference>
<dbReference type="InterPro" id="IPR010371">
    <property type="entry name" value="YBR137W-like"/>
</dbReference>
<dbReference type="NCBIfam" id="NF002693">
    <property type="entry name" value="PRK02487.1-2"/>
    <property type="match status" value="1"/>
</dbReference>
<dbReference type="NCBIfam" id="NF002696">
    <property type="entry name" value="PRK02487.1-5"/>
    <property type="match status" value="1"/>
</dbReference>
<dbReference type="PANTHER" id="PTHR28255">
    <property type="match status" value="1"/>
</dbReference>
<dbReference type="PANTHER" id="PTHR28255:SF1">
    <property type="entry name" value="UPF0303 PROTEIN YBR137W"/>
    <property type="match status" value="1"/>
</dbReference>
<dbReference type="Pfam" id="PF03928">
    <property type="entry name" value="HbpS-like"/>
    <property type="match status" value="1"/>
</dbReference>
<dbReference type="PIRSF" id="PIRSF008757">
    <property type="entry name" value="UCP008757"/>
    <property type="match status" value="1"/>
</dbReference>
<dbReference type="SUPFAM" id="SSF143744">
    <property type="entry name" value="GlcG-like"/>
    <property type="match status" value="1"/>
</dbReference>
<comment type="similarity">
    <text evidence="1">Belongs to the UPF0303 family.</text>
</comment>
<feature type="chain" id="PRO_1000046736" description="UPF0303 protein BOV_1367">
    <location>
        <begin position="1"/>
        <end position="169"/>
    </location>
</feature>
<accession>A5VRF8</accession>
<organism>
    <name type="scientific">Brucella ovis (strain ATCC 25840 / 63/290 / NCTC 10512)</name>
    <dbReference type="NCBI Taxonomy" id="444178"/>
    <lineage>
        <taxon>Bacteria</taxon>
        <taxon>Pseudomonadati</taxon>
        <taxon>Pseudomonadota</taxon>
        <taxon>Alphaproteobacteria</taxon>
        <taxon>Hyphomicrobiales</taxon>
        <taxon>Brucellaceae</taxon>
        <taxon>Brucella/Ochrobactrum group</taxon>
        <taxon>Brucella</taxon>
    </lineage>
</organism>
<evidence type="ECO:0000255" key="1">
    <source>
        <dbReference type="HAMAP-Rule" id="MF_00761"/>
    </source>
</evidence>